<reference key="1">
    <citation type="journal article" date="1992" name="J. Biol. Chem.">
        <title>Pig testicular 20-beta-hydroxysteroid dehydrogenase exhibits carbonyl reductase-like structure and activity: cDNA cloning of pig testicular 2-beta-hydroxysteroid dehydrogenase.</title>
        <authorList>
            <person name="Tanaka M."/>
            <person name="Ohno S."/>
            <person name="Nakajin S."/>
            <person name="Shinoda M."/>
            <person name="Nagahama Y."/>
        </authorList>
    </citation>
    <scope>NUCLEOTIDE SEQUENCE [MRNA]</scope>
    <scope>PROTEIN SEQUENCE OF 80-111; 113-127; 131-152; 160-174; 187-211; 221-239 AND 243-272</scope>
    <scope>FUNCTION</scope>
    <scope>CATALYTIC ACTIVITY</scope>
    <scope>DEVELOPMENTAL STAGE</scope>
</reference>
<reference key="2">
    <citation type="journal article" date="1992" name="Eur. J. Biochem.">
        <title>Purification and properties of prostaglandin 9-ketoreductase from pig and human kidney. Identity with human carbonyl reductase.</title>
        <authorList>
            <person name="Schieber A."/>
            <person name="Frank R.W."/>
            <person name="Ghisla S."/>
        </authorList>
    </citation>
    <scope>FUNCTION</scope>
    <scope>CATALYTIC ACTIVITY</scope>
    <scope>TISSUE SPECIFICITY</scope>
    <scope>BIOPHYSICOCHEMICAL PROPERTIES</scope>
</reference>
<reference key="3">
    <citation type="journal article" date="2001" name="J. Biol. Chem.">
        <title>Porcine carbonyl reductase. Structural basis for a functional monomer in short chain dehydrogenases/reductases.</title>
        <authorList>
            <person name="Ghosh D."/>
            <person name="Sawicki M."/>
            <person name="Pletnev V."/>
            <person name="Erman M."/>
            <person name="Ohno S."/>
            <person name="Nakajin S."/>
            <person name="Duax W.L."/>
        </authorList>
    </citation>
    <scope>X-RAY CRYSTALLOGRAPHY (2.3 ANGSTROMS) IN COMPLEX WITH NADP</scope>
    <scope>SUBUNIT STRUCTURE</scope>
</reference>
<gene>
    <name evidence="1" type="primary">CBR1</name>
    <name type="synonym">CBR</name>
    <name type="synonym">CRN</name>
</gene>
<dbReference type="EC" id="1.1.1.184" evidence="7"/>
<dbReference type="EC" id="1.1.1.196" evidence="7"/>
<dbReference type="EC" id="1.1.1.197" evidence="1"/>
<dbReference type="EC" id="1.1.1.71" evidence="1"/>
<dbReference type="EC" id="1.1.1.189" evidence="7"/>
<dbReference type="EMBL" id="M80709">
    <property type="protein sequence ID" value="AAA30980.1"/>
    <property type="molecule type" value="mRNA"/>
</dbReference>
<dbReference type="PIR" id="A42912">
    <property type="entry name" value="A42912"/>
</dbReference>
<dbReference type="RefSeq" id="NP_999238.1">
    <property type="nucleotide sequence ID" value="NM_214073.1"/>
</dbReference>
<dbReference type="PDB" id="1N5D">
    <property type="method" value="X-ray"/>
    <property type="resolution" value="2.30 A"/>
    <property type="chains" value="A=2-289"/>
</dbReference>
<dbReference type="PDBsum" id="1N5D"/>
<dbReference type="SMR" id="Q28960"/>
<dbReference type="FunCoup" id="Q28960">
    <property type="interactions" value="391"/>
</dbReference>
<dbReference type="STRING" id="9823.ENSSSCP00000052333"/>
<dbReference type="SwissLipids" id="SLP:000001473"/>
<dbReference type="PeptideAtlas" id="Q28960"/>
<dbReference type="Ensembl" id="ENSSSCT00000062193.2">
    <property type="protein sequence ID" value="ENSSSCP00000052333.1"/>
    <property type="gene ID" value="ENSSSCG00000031111.3"/>
</dbReference>
<dbReference type="Ensembl" id="ENSSSCT00045036349.1">
    <property type="protein sequence ID" value="ENSSSCP00045025284.1"/>
    <property type="gene ID" value="ENSSSCG00045021225.1"/>
</dbReference>
<dbReference type="Ensembl" id="ENSSSCT00065082755.1">
    <property type="protein sequence ID" value="ENSSSCP00065036060.1"/>
    <property type="gene ID" value="ENSSSCG00065060377.1"/>
</dbReference>
<dbReference type="Ensembl" id="ENSSSCT00070022530.1">
    <property type="protein sequence ID" value="ENSSSCP00070018650.1"/>
    <property type="gene ID" value="ENSSSCG00070011561.1"/>
</dbReference>
<dbReference type="Ensembl" id="ENSSSCT00105050241">
    <property type="protein sequence ID" value="ENSSSCP00105035359"/>
    <property type="gene ID" value="ENSSSCG00105026457"/>
</dbReference>
<dbReference type="Ensembl" id="ENSSSCT00110029062">
    <property type="protein sequence ID" value="ENSSSCP00110019634"/>
    <property type="gene ID" value="ENSSSCG00110015248"/>
</dbReference>
<dbReference type="Ensembl" id="ENSSSCT00130065101">
    <property type="protein sequence ID" value="ENSSSCP00130046700"/>
    <property type="gene ID" value="ENSSSCG00130033301"/>
</dbReference>
<dbReference type="GeneID" id="397143"/>
<dbReference type="KEGG" id="ssc:397143"/>
<dbReference type="CTD" id="873"/>
<dbReference type="GeneTree" id="ENSGT00510000046499"/>
<dbReference type="InParanoid" id="Q28960"/>
<dbReference type="OMA" id="KAFDIMN"/>
<dbReference type="OrthoDB" id="7289984at2759"/>
<dbReference type="BRENDA" id="1.1.1.184">
    <property type="organism ID" value="6170"/>
</dbReference>
<dbReference type="BRENDA" id="1.1.1.189">
    <property type="organism ID" value="6170"/>
</dbReference>
<dbReference type="EvolutionaryTrace" id="Q28960"/>
<dbReference type="Proteomes" id="UP000008227">
    <property type="component" value="Chromosome 13"/>
</dbReference>
<dbReference type="Proteomes" id="UP000314985">
    <property type="component" value="Chromosome 13"/>
</dbReference>
<dbReference type="Proteomes" id="UP000694570">
    <property type="component" value="Unplaced"/>
</dbReference>
<dbReference type="Proteomes" id="UP000694571">
    <property type="component" value="Unplaced"/>
</dbReference>
<dbReference type="Proteomes" id="UP000694720">
    <property type="component" value="Unplaced"/>
</dbReference>
<dbReference type="Proteomes" id="UP000694722">
    <property type="component" value="Unplaced"/>
</dbReference>
<dbReference type="Proteomes" id="UP000694723">
    <property type="component" value="Unplaced"/>
</dbReference>
<dbReference type="Proteomes" id="UP000694724">
    <property type="component" value="Unplaced"/>
</dbReference>
<dbReference type="Proteomes" id="UP000694725">
    <property type="component" value="Unplaced"/>
</dbReference>
<dbReference type="Proteomes" id="UP000694726">
    <property type="component" value="Unplaced"/>
</dbReference>
<dbReference type="Proteomes" id="UP000694727">
    <property type="component" value="Unplaced"/>
</dbReference>
<dbReference type="Proteomes" id="UP000694728">
    <property type="component" value="Unplaced"/>
</dbReference>
<dbReference type="Bgee" id="ENSSSCG00000031111">
    <property type="expression patterns" value="Expressed in lymph node and 14 other cell types or tissues"/>
</dbReference>
<dbReference type="ExpressionAtlas" id="Q28960">
    <property type="expression patterns" value="differential"/>
</dbReference>
<dbReference type="GO" id="GO:0005737">
    <property type="term" value="C:cytoplasm"/>
    <property type="evidence" value="ECO:0007669"/>
    <property type="project" value="UniProtKB-SubCell"/>
</dbReference>
<dbReference type="GO" id="GO:0047021">
    <property type="term" value="F:15-hydroxyprostaglandin dehydrogenase (NADP+) activity"/>
    <property type="evidence" value="ECO:0000314"/>
    <property type="project" value="UniProtKB"/>
</dbReference>
<dbReference type="GO" id="GO:0047020">
    <property type="term" value="F:15-hydroxyprostaglandin-D dehydrogenase (NADP+) activity"/>
    <property type="evidence" value="ECO:0007669"/>
    <property type="project" value="UniProtKB-EC"/>
</dbReference>
<dbReference type="GO" id="GO:0004090">
    <property type="term" value="F:carbonyl reductase (NADPH) activity"/>
    <property type="evidence" value="ECO:0000314"/>
    <property type="project" value="UniProtKB"/>
</dbReference>
<dbReference type="GO" id="GO:0050221">
    <property type="term" value="F:prostaglandin E2 9-reductase activity"/>
    <property type="evidence" value="ECO:0000314"/>
    <property type="project" value="UniProtKB"/>
</dbReference>
<dbReference type="GO" id="GO:0160163">
    <property type="term" value="F:S-nitrosoglutathione reductase (NADPH) activity"/>
    <property type="evidence" value="ECO:0007669"/>
    <property type="project" value="RHEA"/>
</dbReference>
<dbReference type="GO" id="GO:0006629">
    <property type="term" value="P:lipid metabolic process"/>
    <property type="evidence" value="ECO:0007669"/>
    <property type="project" value="UniProtKB-KW"/>
</dbReference>
<dbReference type="GO" id="GO:0042373">
    <property type="term" value="P:vitamin K metabolic process"/>
    <property type="evidence" value="ECO:0000250"/>
    <property type="project" value="UniProtKB"/>
</dbReference>
<dbReference type="GO" id="GO:0006805">
    <property type="term" value="P:xenobiotic metabolic process"/>
    <property type="evidence" value="ECO:0000250"/>
    <property type="project" value="UniProtKB"/>
</dbReference>
<dbReference type="CDD" id="cd05324">
    <property type="entry name" value="carb_red_PTCR-like_SDR_c"/>
    <property type="match status" value="1"/>
</dbReference>
<dbReference type="FunFam" id="3.40.50.720:FF:000164">
    <property type="entry name" value="Carbonyl reductase [NADPH] 1"/>
    <property type="match status" value="1"/>
</dbReference>
<dbReference type="Gene3D" id="3.40.50.720">
    <property type="entry name" value="NAD(P)-binding Rossmann-like Domain"/>
    <property type="match status" value="1"/>
</dbReference>
<dbReference type="InterPro" id="IPR045313">
    <property type="entry name" value="CBR1-like"/>
</dbReference>
<dbReference type="InterPro" id="IPR036291">
    <property type="entry name" value="NAD(P)-bd_dom_sf"/>
</dbReference>
<dbReference type="InterPro" id="IPR020904">
    <property type="entry name" value="Sc_DH/Rdtase_CS"/>
</dbReference>
<dbReference type="InterPro" id="IPR002347">
    <property type="entry name" value="SDR_fam"/>
</dbReference>
<dbReference type="PANTHER" id="PTHR43963">
    <property type="entry name" value="CARBONYL REDUCTASE 1-RELATED"/>
    <property type="match status" value="1"/>
</dbReference>
<dbReference type="PANTHER" id="PTHR43963:SF2">
    <property type="entry name" value="CARBONYL REDUCTASE [NADPH] 1"/>
    <property type="match status" value="1"/>
</dbReference>
<dbReference type="Pfam" id="PF00106">
    <property type="entry name" value="adh_short"/>
    <property type="match status" value="1"/>
</dbReference>
<dbReference type="PRINTS" id="PR00081">
    <property type="entry name" value="GDHRDH"/>
</dbReference>
<dbReference type="PRINTS" id="PR00080">
    <property type="entry name" value="SDRFAMILY"/>
</dbReference>
<dbReference type="SUPFAM" id="SSF51735">
    <property type="entry name" value="NAD(P)-binding Rossmann-fold domains"/>
    <property type="match status" value="1"/>
</dbReference>
<dbReference type="PROSITE" id="PS00061">
    <property type="entry name" value="ADH_SHORT"/>
    <property type="match status" value="1"/>
</dbReference>
<organism>
    <name type="scientific">Sus scrofa</name>
    <name type="common">Pig</name>
    <dbReference type="NCBI Taxonomy" id="9823"/>
    <lineage>
        <taxon>Eukaryota</taxon>
        <taxon>Metazoa</taxon>
        <taxon>Chordata</taxon>
        <taxon>Craniata</taxon>
        <taxon>Vertebrata</taxon>
        <taxon>Euteleostomi</taxon>
        <taxon>Mammalia</taxon>
        <taxon>Eutheria</taxon>
        <taxon>Laurasiatheria</taxon>
        <taxon>Artiodactyla</taxon>
        <taxon>Suina</taxon>
        <taxon>Suidae</taxon>
        <taxon>Sus</taxon>
    </lineage>
</organism>
<keyword id="KW-0002">3D-structure</keyword>
<keyword id="KW-0007">Acetylation</keyword>
<keyword id="KW-0963">Cytoplasm</keyword>
<keyword id="KW-0903">Direct protein sequencing</keyword>
<keyword id="KW-0443">Lipid metabolism</keyword>
<keyword id="KW-0521">NADP</keyword>
<keyword id="KW-0560">Oxidoreductase</keyword>
<keyword id="KW-0597">Phosphoprotein</keyword>
<keyword id="KW-1185">Reference proteome</keyword>
<feature type="initiator methionine" description="Removed" evidence="1">
    <location>
        <position position="1"/>
    </location>
</feature>
<feature type="chain" id="PRO_0000054604" description="Carbonyl reductase [NADPH] 1">
    <location>
        <begin position="2"/>
        <end position="289"/>
    </location>
</feature>
<feature type="active site" description="Proton acceptor" evidence="4">
    <location>
        <position position="194"/>
    </location>
</feature>
<feature type="binding site" evidence="5">
    <location>
        <begin position="10"/>
        <end position="34"/>
    </location>
    <ligand>
        <name>NADP(+)</name>
        <dbReference type="ChEBI" id="CHEBI:58349"/>
    </ligand>
</feature>
<feature type="binding site" evidence="1">
    <location>
        <begin position="63"/>
        <end position="64"/>
    </location>
    <ligand>
        <name>NADP(+)</name>
        <dbReference type="ChEBI" id="CHEBI:58349"/>
    </ligand>
</feature>
<feature type="binding site" evidence="1">
    <location>
        <position position="90"/>
    </location>
    <ligand>
        <name>NADP(+)</name>
        <dbReference type="ChEBI" id="CHEBI:58349"/>
    </ligand>
</feature>
<feature type="binding site" evidence="1">
    <location>
        <begin position="95"/>
        <end position="97"/>
    </location>
    <ligand>
        <name>glutathione</name>
        <dbReference type="ChEBI" id="CHEBI:57925"/>
    </ligand>
</feature>
<feature type="binding site" evidence="1">
    <location>
        <position position="106"/>
    </location>
    <ligand>
        <name>glutathione</name>
        <dbReference type="ChEBI" id="CHEBI:57925"/>
    </ligand>
</feature>
<feature type="binding site" evidence="1">
    <location>
        <position position="140"/>
    </location>
    <ligand>
        <name>substrate</name>
    </ligand>
</feature>
<feature type="binding site" evidence="1">
    <location>
        <begin position="193"/>
        <end position="194"/>
    </location>
    <ligand>
        <name>glutathione</name>
        <dbReference type="ChEBI" id="CHEBI:57925"/>
    </ligand>
</feature>
<feature type="binding site" evidence="1">
    <location>
        <begin position="194"/>
        <end position="198"/>
    </location>
    <ligand>
        <name>NADP(+)</name>
        <dbReference type="ChEBI" id="CHEBI:58349"/>
    </ligand>
</feature>
<feature type="binding site" evidence="1">
    <location>
        <begin position="231"/>
        <end position="233"/>
    </location>
    <ligand>
        <name>NADP(+)</name>
        <dbReference type="ChEBI" id="CHEBI:58349"/>
    </ligand>
</feature>
<feature type="modified residue" description="N-acetylserine" evidence="1">
    <location>
        <position position="2"/>
    </location>
</feature>
<feature type="modified residue" description="Phosphoserine" evidence="2">
    <location>
        <position position="2"/>
    </location>
</feature>
<feature type="modified residue" description="N6-1-carboxyethyl lysine" evidence="1">
    <location>
        <position position="239"/>
    </location>
</feature>
<feature type="strand" evidence="12">
    <location>
        <begin position="7"/>
        <end position="12"/>
    </location>
</feature>
<feature type="helix" evidence="12">
    <location>
        <begin position="16"/>
        <end position="28"/>
    </location>
</feature>
<feature type="strand" evidence="12">
    <location>
        <begin position="30"/>
        <end position="39"/>
    </location>
</feature>
<feature type="helix" evidence="12">
    <location>
        <begin position="40"/>
        <end position="51"/>
    </location>
</feature>
<feature type="turn" evidence="12">
    <location>
        <begin position="52"/>
        <end position="54"/>
    </location>
</feature>
<feature type="strand" evidence="12">
    <location>
        <begin position="58"/>
        <end position="61"/>
    </location>
</feature>
<feature type="helix" evidence="12">
    <location>
        <begin position="67"/>
        <end position="81"/>
    </location>
</feature>
<feature type="strand" evidence="12">
    <location>
        <begin position="82"/>
        <end position="89"/>
    </location>
</feature>
<feature type="helix" evidence="12">
    <location>
        <begin position="103"/>
        <end position="114"/>
    </location>
</feature>
<feature type="helix" evidence="12">
    <location>
        <begin position="116"/>
        <end position="125"/>
    </location>
</feature>
<feature type="helix" evidence="12">
    <location>
        <begin position="126"/>
        <end position="128"/>
    </location>
</feature>
<feature type="strand" evidence="12">
    <location>
        <begin position="129"/>
        <end position="138"/>
    </location>
</feature>
<feature type="helix" evidence="12">
    <location>
        <begin position="142"/>
        <end position="149"/>
    </location>
</feature>
<feature type="helix" evidence="12">
    <location>
        <begin position="152"/>
        <end position="159"/>
    </location>
</feature>
<feature type="helix" evidence="12">
    <location>
        <begin position="165"/>
        <end position="180"/>
    </location>
</feature>
<feature type="turn" evidence="12">
    <location>
        <begin position="184"/>
        <end position="188"/>
    </location>
</feature>
<feature type="helix" evidence="12">
    <location>
        <begin position="193"/>
        <end position="215"/>
    </location>
</feature>
<feature type="helix" evidence="12">
    <location>
        <begin position="217"/>
        <end position="219"/>
    </location>
</feature>
<feature type="strand" evidence="12">
    <location>
        <begin position="222"/>
        <end position="227"/>
    </location>
</feature>
<feature type="strand" evidence="12">
    <location>
        <begin position="230"/>
        <end position="233"/>
    </location>
</feature>
<feature type="turn" evidence="12">
    <location>
        <begin position="234"/>
        <end position="236"/>
    </location>
</feature>
<feature type="helix" evidence="12">
    <location>
        <begin position="244"/>
        <end position="247"/>
    </location>
</feature>
<feature type="helix" evidence="12">
    <location>
        <begin position="249"/>
        <end position="255"/>
    </location>
</feature>
<feature type="strand" evidence="12">
    <location>
        <begin position="268"/>
        <end position="270"/>
    </location>
</feature>
<name>CBR1_PIG</name>
<accession>Q28960</accession>
<evidence type="ECO:0000250" key="1">
    <source>
        <dbReference type="UniProtKB" id="P16152"/>
    </source>
</evidence>
<evidence type="ECO:0000250" key="2">
    <source>
        <dbReference type="UniProtKB" id="P47727"/>
    </source>
</evidence>
<evidence type="ECO:0000250" key="3">
    <source>
        <dbReference type="UniProtKB" id="P48758"/>
    </source>
</evidence>
<evidence type="ECO:0000255" key="4">
    <source>
        <dbReference type="PROSITE-ProRule" id="PRU10001"/>
    </source>
</evidence>
<evidence type="ECO:0000269" key="5">
    <source>
    </source>
</evidence>
<evidence type="ECO:0000269" key="6">
    <source>
    </source>
</evidence>
<evidence type="ECO:0000269" key="7">
    <source>
    </source>
</evidence>
<evidence type="ECO:0000303" key="8">
    <source>
    </source>
</evidence>
<evidence type="ECO:0000303" key="9">
    <source>
    </source>
</evidence>
<evidence type="ECO:0000305" key="10"/>
<evidence type="ECO:0000305" key="11">
    <source>
    </source>
</evidence>
<evidence type="ECO:0007829" key="12">
    <source>
        <dbReference type="PDB" id="1N5D"/>
    </source>
</evidence>
<protein>
    <recommendedName>
        <fullName evidence="10">Carbonyl reductase [NADPH] 1</fullName>
        <ecNumber evidence="7">1.1.1.184</ecNumber>
    </recommendedName>
    <alternativeName>
        <fullName evidence="9">15-hydroxyprostaglandin dehydrogenase [NADP(+)]</fullName>
        <ecNumber evidence="7">1.1.1.196</ecNumber>
        <ecNumber evidence="1">1.1.1.197</ecNumber>
    </alternativeName>
    <alternativeName>
        <fullName evidence="8">20-beta-hydroxysteroid dehydrogenase</fullName>
    </alternativeName>
    <alternativeName>
        <fullName>Alcohol dehydrogenase [NAD(P)+] CBR1</fullName>
        <ecNumber evidence="1">1.1.1.71</ecNumber>
    </alternativeName>
    <alternativeName>
        <fullName>NADPH-dependent carbonyl reductase 1</fullName>
    </alternativeName>
    <alternativeName>
        <fullName evidence="9">Prostaglandin 9-ketoreductase</fullName>
        <shortName evidence="9">PG-9-KR</shortName>
    </alternativeName>
    <alternativeName>
        <fullName evidence="9">Prostaglandin-E(2) 9-reductase</fullName>
        <ecNumber evidence="7">1.1.1.189</ecNumber>
    </alternativeName>
</protein>
<sequence>MSSNTRVALVTGANKGIGFAIVRDLCRQFAGDVVLTARDVARGQAAVKQLQAEGLSPRFHQLDIIDLQSIRALCDFLRKEYGGLDVLVNNAAIAFQLDNPTPFHIQAELTMKTNFMGTRNVCTELLPLIKPQGRVVNVSSTEGVRALNECSPELQQKFKSETITEEELVGLMNKFVEDTKNGVHRKEGWSDSTYGVTKIGVSVLSRIYARKLREQRAGDKILLNACCPGWVRTDMGGPKAPKSPEVGAETPVYLALLPSDAEGPHGQFVTDKKVVEWGVPPESYPWVNA</sequence>
<proteinExistence type="evidence at protein level"/>
<comment type="function">
    <text evidence="1 6 7">NADPH-dependent reductase with broad substrate specificity. Catalyzes the reduction of a wide variety of carbonyl compounds including quinones, prostaglandins, menadione, plus various xenobiotics. Catalyzes the reduction of the antitumor anthracyclines doxorubicin and daunorubicin to the cardiotoxic compounds doxorubicinol and daunorubicinol. Can convert prostaglandin E2 to prostaglandin F2-alpha (PubMed:1377683, PubMed:1597188). Can bind glutathione, which explains its higher affinity for glutathione-conjugated substrates. Catalyzes the reduction of S-nitrosoglutathione. In addition, participates in the glucocorticoid metabolism by catalyzing the NADPH-dependent cortisol/corticosterone into 20beta-dihydrocortisol (20b-DHF) or 20beta-corticosterone (20b-DHB), which are weak agonists of NR3C1 and NR3C2 in adipose tissue (By similarity).</text>
</comment>
<comment type="catalytic activity">
    <reaction evidence="7">
        <text>a secondary alcohol + NADP(+) = a ketone + NADPH + H(+)</text>
        <dbReference type="Rhea" id="RHEA:19257"/>
        <dbReference type="ChEBI" id="CHEBI:15378"/>
        <dbReference type="ChEBI" id="CHEBI:17087"/>
        <dbReference type="ChEBI" id="CHEBI:35681"/>
        <dbReference type="ChEBI" id="CHEBI:57783"/>
        <dbReference type="ChEBI" id="CHEBI:58349"/>
        <dbReference type="EC" id="1.1.1.184"/>
    </reaction>
</comment>
<comment type="catalytic activity">
    <reaction evidence="1">
        <text>prostaglandin E1 + NADP(+) = 15-oxoprostaglandin E1 + NADPH + H(+)</text>
        <dbReference type="Rhea" id="RHEA:11636"/>
        <dbReference type="ChEBI" id="CHEBI:15378"/>
        <dbReference type="ChEBI" id="CHEBI:57397"/>
        <dbReference type="ChEBI" id="CHEBI:57401"/>
        <dbReference type="ChEBI" id="CHEBI:57783"/>
        <dbReference type="ChEBI" id="CHEBI:58349"/>
        <dbReference type="EC" id="1.1.1.197"/>
    </reaction>
    <physiologicalReaction direction="left-to-right" evidence="1">
        <dbReference type="Rhea" id="RHEA:11637"/>
    </physiologicalReaction>
</comment>
<comment type="catalytic activity">
    <reaction evidence="7">
        <text>prostaglandin F2alpha + NADP(+) = prostaglandin E2 + NADPH + H(+)</text>
        <dbReference type="Rhea" id="RHEA:24508"/>
        <dbReference type="ChEBI" id="CHEBI:15378"/>
        <dbReference type="ChEBI" id="CHEBI:57404"/>
        <dbReference type="ChEBI" id="CHEBI:57783"/>
        <dbReference type="ChEBI" id="CHEBI:58349"/>
        <dbReference type="ChEBI" id="CHEBI:606564"/>
        <dbReference type="EC" id="1.1.1.189"/>
    </reaction>
    <physiologicalReaction direction="right-to-left" evidence="11">
        <dbReference type="Rhea" id="RHEA:24510"/>
    </physiologicalReaction>
</comment>
<comment type="catalytic activity">
    <reaction evidence="7">
        <text>prostaglandin D2 + NADP(+) = 15-oxoprostaglandin D2 + NADPH + H(+)</text>
        <dbReference type="Rhea" id="RHEA:20744"/>
        <dbReference type="ChEBI" id="CHEBI:15378"/>
        <dbReference type="ChEBI" id="CHEBI:57406"/>
        <dbReference type="ChEBI" id="CHEBI:57408"/>
        <dbReference type="ChEBI" id="CHEBI:57783"/>
        <dbReference type="ChEBI" id="CHEBI:58349"/>
        <dbReference type="EC" id="1.1.1.196"/>
    </reaction>
    <physiologicalReaction direction="left-to-right" evidence="11">
        <dbReference type="Rhea" id="RHEA:20745"/>
    </physiologicalReaction>
</comment>
<comment type="catalytic activity">
    <reaction evidence="7">
        <text>prostaglandin E2 + NADP(+) = 15-oxoprostaglandin E2 + NADPH + H(+)</text>
        <dbReference type="Rhea" id="RHEA:63476"/>
        <dbReference type="ChEBI" id="CHEBI:15378"/>
        <dbReference type="ChEBI" id="CHEBI:57400"/>
        <dbReference type="ChEBI" id="CHEBI:57783"/>
        <dbReference type="ChEBI" id="CHEBI:58349"/>
        <dbReference type="ChEBI" id="CHEBI:606564"/>
    </reaction>
    <physiologicalReaction direction="left-to-right" evidence="11">
        <dbReference type="Rhea" id="RHEA:63477"/>
    </physiologicalReaction>
</comment>
<comment type="catalytic activity">
    <reaction evidence="7">
        <text>prostaglandin F2alpha + NADP(+) = 15-oxoprostaglandin F2alpha + NADPH + H(+)</text>
        <dbReference type="Rhea" id="RHEA:63480"/>
        <dbReference type="ChEBI" id="CHEBI:15378"/>
        <dbReference type="ChEBI" id="CHEBI:57404"/>
        <dbReference type="ChEBI" id="CHEBI:57783"/>
        <dbReference type="ChEBI" id="CHEBI:58349"/>
        <dbReference type="ChEBI" id="CHEBI:133409"/>
    </reaction>
    <physiologicalReaction direction="left-to-right" evidence="11">
        <dbReference type="Rhea" id="RHEA:63481"/>
    </physiologicalReaction>
</comment>
<comment type="catalytic activity">
    <reaction evidence="6 7">
        <text>menadione + NADPH + H(+) = menadiol + NADP(+)</text>
        <dbReference type="Rhea" id="RHEA:63492"/>
        <dbReference type="ChEBI" id="CHEBI:6746"/>
        <dbReference type="ChEBI" id="CHEBI:15378"/>
        <dbReference type="ChEBI" id="CHEBI:28869"/>
        <dbReference type="ChEBI" id="CHEBI:57783"/>
        <dbReference type="ChEBI" id="CHEBI:58349"/>
    </reaction>
</comment>
<comment type="catalytic activity">
    <reaction evidence="7">
        <text>daunorubicin + NADPH + H(+) = 13-dihydrodaunorubicin + NADP(+)</text>
        <dbReference type="Rhea" id="RHEA:63504"/>
        <dbReference type="ChEBI" id="CHEBI:15378"/>
        <dbReference type="ChEBI" id="CHEBI:57783"/>
        <dbReference type="ChEBI" id="CHEBI:58349"/>
        <dbReference type="ChEBI" id="CHEBI:64677"/>
        <dbReference type="ChEBI" id="CHEBI:75296"/>
    </reaction>
    <physiologicalReaction direction="left-to-right" evidence="1">
        <dbReference type="Rhea" id="RHEA:63505"/>
    </physiologicalReaction>
</comment>
<comment type="catalytic activity">
    <reaction evidence="7">
        <text>S-nitrosoglutathione + NADPH + H(+) = S-(hydroxysulfenamide)glutathione + NADP(+)</text>
        <dbReference type="Rhea" id="RHEA:63500"/>
        <dbReference type="ChEBI" id="CHEBI:15378"/>
        <dbReference type="ChEBI" id="CHEBI:57783"/>
        <dbReference type="ChEBI" id="CHEBI:58349"/>
        <dbReference type="ChEBI" id="CHEBI:145544"/>
        <dbReference type="ChEBI" id="CHEBI:229723"/>
    </reaction>
</comment>
<comment type="catalytic activity">
    <reaction evidence="1">
        <text>a primary alcohol + NADP(+) = an aldehyde + NADPH + H(+)</text>
        <dbReference type="Rhea" id="RHEA:15937"/>
        <dbReference type="ChEBI" id="CHEBI:15378"/>
        <dbReference type="ChEBI" id="CHEBI:15734"/>
        <dbReference type="ChEBI" id="CHEBI:17478"/>
        <dbReference type="ChEBI" id="CHEBI:57783"/>
        <dbReference type="ChEBI" id="CHEBI:58349"/>
        <dbReference type="EC" id="1.1.1.71"/>
    </reaction>
</comment>
<comment type="catalytic activity">
    <reaction evidence="1">
        <text>cortisol + NADPH + H(+) = 20beta-dihydrocortisol + NADP(+)</text>
        <dbReference type="Rhea" id="RHEA:70215"/>
        <dbReference type="ChEBI" id="CHEBI:15378"/>
        <dbReference type="ChEBI" id="CHEBI:17650"/>
        <dbReference type="ChEBI" id="CHEBI:57783"/>
        <dbReference type="ChEBI" id="CHEBI:58349"/>
        <dbReference type="ChEBI" id="CHEBI:139311"/>
    </reaction>
    <physiologicalReaction direction="left-to-right" evidence="1">
        <dbReference type="Rhea" id="RHEA:70216"/>
    </physiologicalReaction>
</comment>
<comment type="catalytic activity">
    <reaction evidence="3">
        <text>corticosterone + NADPH + H(+) = 20beta-dihydrocorticosterone + NADP(+)</text>
        <dbReference type="Rhea" id="RHEA:70219"/>
        <dbReference type="ChEBI" id="CHEBI:15378"/>
        <dbReference type="ChEBI" id="CHEBI:16827"/>
        <dbReference type="ChEBI" id="CHEBI:57783"/>
        <dbReference type="ChEBI" id="CHEBI:58349"/>
        <dbReference type="ChEBI" id="CHEBI:189050"/>
    </reaction>
    <physiologicalReaction direction="left-to-right" evidence="3">
        <dbReference type="Rhea" id="RHEA:70220"/>
    </physiologicalReaction>
</comment>
<comment type="biophysicochemical properties">
    <kinetics>
        <KM evidence="7">160 uM for prostaglandin E2</KM>
        <KM evidence="7">310 uM for menadione</KM>
        <KM evidence="7">2.3 uM for 9,1 O-phenanthrene-quinone</KM>
        <KM evidence="7">450 uM for 4-nitrobenzaldehyde</KM>
        <KM evidence="7">5.2 uM for NADPH</KM>
        <Vmax evidence="7">0.059 umol/min/mg enzyme towards prostaglandin E2</Vmax>
        <Vmax evidence="7">9.4 umol/min/mg enzyme towards menadione</Vmax>
        <Vmax evidence="7">15.2 umol/min/mg enzyme towards 9,1 O-phenanthrene-quinone</Vmax>
        <Vmax evidence="7">1.9 umol/min/mg enzyme towards 4-nitrobenzaldehyde</Vmax>
        <text evidence="7">kcats are 2 min(-1), 285 min(-1), 460 min(-1), 58 min(-1) for prostaglandin E2, menadione, 9,1 O-phenanthrene-quinone and 4-nitrobenzaldehyde as substrates, respectively.</text>
    </kinetics>
</comment>
<comment type="subunit">
    <text evidence="5">Monomer.</text>
</comment>
<comment type="subcellular location">
    <subcellularLocation>
        <location evidence="10">Cytoplasm</location>
    </subcellularLocation>
</comment>
<comment type="tissue specificity">
    <text evidence="7">Expressed in kidney (at protein level).</text>
</comment>
<comment type="developmental stage">
    <text evidence="6">Highly expressed in testis from newborns. After 30 days the levels are markedly decreased.</text>
</comment>
<comment type="similarity">
    <text evidence="10">Belongs to the short-chain dehydrogenases/reductases (SDR) family.</text>
</comment>